<keyword id="KW-0002">3D-structure</keyword>
<keyword id="KW-0046">Antibiotic resistance</keyword>
<keyword id="KW-0378">Hydrolase</keyword>
<keyword id="KW-0614">Plasmid</keyword>
<keyword id="KW-0732">Signal</keyword>
<dbReference type="EC" id="3.5.2.6"/>
<dbReference type="EMBL" id="D37830">
    <property type="protein sequence ID" value="BAA07082.1"/>
    <property type="molecule type" value="Genomic_DNA"/>
</dbReference>
<dbReference type="PIR" id="JP0074">
    <property type="entry name" value="JP0074"/>
</dbReference>
<dbReference type="RefSeq" id="WP_063860054.1">
    <property type="nucleotide sequence ID" value="NG_048995.1"/>
</dbReference>
<dbReference type="PDB" id="1BZA">
    <property type="method" value="X-ray"/>
    <property type="resolution" value="1.80 A"/>
    <property type="chains" value="A=30-290"/>
</dbReference>
<dbReference type="PDB" id="1IYO">
    <property type="method" value="X-ray"/>
    <property type="resolution" value="1.80 A"/>
    <property type="chains" value="A=30-291"/>
</dbReference>
<dbReference type="PDB" id="1IYP">
    <property type="method" value="X-ray"/>
    <property type="resolution" value="2.00 A"/>
    <property type="chains" value="A=30-291"/>
</dbReference>
<dbReference type="PDB" id="1IYQ">
    <property type="method" value="X-ray"/>
    <property type="resolution" value="2.10 A"/>
    <property type="chains" value="A=30-291"/>
</dbReference>
<dbReference type="PDB" id="1IYS">
    <property type="method" value="X-ray"/>
    <property type="resolution" value="1.65 A"/>
    <property type="chains" value="A=31-291"/>
</dbReference>
<dbReference type="PDB" id="1WE4">
    <property type="method" value="X-ray"/>
    <property type="resolution" value="1.70 A"/>
    <property type="chains" value="A=30-291"/>
</dbReference>
<dbReference type="PDB" id="2WYX">
    <property type="method" value="Neutron"/>
    <property type="resolution" value="2.10 A"/>
    <property type="chains" value="A=33-288"/>
</dbReference>
<dbReference type="PDB" id="2XQZ">
    <property type="method" value="Neutron"/>
    <property type="resolution" value="2.10 A"/>
    <property type="chains" value="A=32-291"/>
</dbReference>
<dbReference type="PDB" id="2XR0">
    <property type="method" value="X-ray"/>
    <property type="resolution" value="2.20 A"/>
    <property type="chains" value="A=32-291"/>
</dbReference>
<dbReference type="PDB" id="2ZQ7">
    <property type="method" value="X-ray"/>
    <property type="resolution" value="0.94 A"/>
    <property type="chains" value="A=30-291"/>
</dbReference>
<dbReference type="PDB" id="2ZQ8">
    <property type="method" value="X-ray"/>
    <property type="resolution" value="1.03 A"/>
    <property type="chains" value="A=30-291"/>
</dbReference>
<dbReference type="PDB" id="2ZQ9">
    <property type="method" value="X-ray"/>
    <property type="resolution" value="1.07 A"/>
    <property type="chains" value="A=30-291"/>
</dbReference>
<dbReference type="PDB" id="2ZQA">
    <property type="method" value="X-ray"/>
    <property type="resolution" value="0.95 A"/>
    <property type="chains" value="A=30-291"/>
</dbReference>
<dbReference type="PDB" id="2ZQC">
    <property type="method" value="X-ray"/>
    <property type="resolution" value="1.07 A"/>
    <property type="chains" value="A=30-291"/>
</dbReference>
<dbReference type="PDB" id="2ZQD">
    <property type="method" value="X-ray"/>
    <property type="resolution" value="1.19 A"/>
    <property type="chains" value="A=30-291"/>
</dbReference>
<dbReference type="PDB" id="4BD0">
    <property type="method" value="X-ray"/>
    <property type="resolution" value="1.21 A"/>
    <property type="chains" value="A=31-291"/>
</dbReference>
<dbReference type="PDB" id="4BD1">
    <property type="method" value="Neutron"/>
    <property type="resolution" value="2.00 A"/>
    <property type="chains" value="A=31-291"/>
</dbReference>
<dbReference type="PDB" id="4C3Q">
    <property type="method" value="Neutron"/>
    <property type="resolution" value="2.20 A"/>
    <property type="chains" value="A=31-291"/>
</dbReference>
<dbReference type="PDB" id="4X69">
    <property type="method" value="X-ray"/>
    <property type="resolution" value="1.42 A"/>
    <property type="chains" value="A/B=30-291"/>
</dbReference>
<dbReference type="PDB" id="5KMW">
    <property type="method" value="X-ray"/>
    <property type="resolution" value="1.10 A"/>
    <property type="chains" value="A=33-288"/>
</dbReference>
<dbReference type="PDB" id="5KSC">
    <property type="method" value="Neutron"/>
    <property type="resolution" value="2.10 A"/>
    <property type="chains" value="A=31-291"/>
</dbReference>
<dbReference type="PDB" id="6C78">
    <property type="method" value="Neutron"/>
    <property type="resolution" value="1.75 A"/>
    <property type="chains" value="A=32-291"/>
</dbReference>
<dbReference type="PDB" id="6C79">
    <property type="method" value="X-ray"/>
    <property type="resolution" value="1.10 A"/>
    <property type="chains" value="A=32-291"/>
</dbReference>
<dbReference type="PDB" id="6C7A">
    <property type="method" value="X-ray"/>
    <property type="resolution" value="1.05 A"/>
    <property type="chains" value="A=32-291"/>
</dbReference>
<dbReference type="PDB" id="6U58">
    <property type="method" value="Other"/>
    <property type="resolution" value="1.90 A"/>
    <property type="chains" value="A=31-291"/>
</dbReference>
<dbReference type="PDBsum" id="1BZA"/>
<dbReference type="PDBsum" id="1IYO"/>
<dbReference type="PDBsum" id="1IYP"/>
<dbReference type="PDBsum" id="1IYQ"/>
<dbReference type="PDBsum" id="1IYS"/>
<dbReference type="PDBsum" id="1WE4"/>
<dbReference type="PDBsum" id="2WYX"/>
<dbReference type="PDBsum" id="2XQZ"/>
<dbReference type="PDBsum" id="2XR0"/>
<dbReference type="PDBsum" id="2ZQ7"/>
<dbReference type="PDBsum" id="2ZQ8"/>
<dbReference type="PDBsum" id="2ZQ9"/>
<dbReference type="PDBsum" id="2ZQA"/>
<dbReference type="PDBsum" id="2ZQC"/>
<dbReference type="PDBsum" id="2ZQD"/>
<dbReference type="PDBsum" id="4BD0"/>
<dbReference type="PDBsum" id="4BD1"/>
<dbReference type="PDBsum" id="4C3Q"/>
<dbReference type="PDBsum" id="4X69"/>
<dbReference type="PDBsum" id="5KMW"/>
<dbReference type="PDBsum" id="5KSC"/>
<dbReference type="PDBsum" id="6C78"/>
<dbReference type="PDBsum" id="6C79"/>
<dbReference type="PDBsum" id="6C7A"/>
<dbReference type="PDBsum" id="6U58"/>
<dbReference type="SMR" id="Q47066"/>
<dbReference type="ChEMBL" id="CHEMBL1697675"/>
<dbReference type="DrugBank" id="DB08375">
    <property type="generic name" value="(2R)-2-[(1R)-1-[[(2Z)-2-(2-Amino-1,3-thiazol-4-yl)-2-methoxyiminoacetyl]amino]-2-oxoethyl]-5-methylidene-2H-1,3-thiazine-4-carboxylic acid"/>
</dbReference>
<dbReference type="DrugBank" id="DB00355">
    <property type="generic name" value="Aztreonam"/>
</dbReference>
<dbReference type="DrugBank" id="DB00578">
    <property type="generic name" value="Carbenicillin"/>
</dbReference>
<dbReference type="DrugBank" id="DB00438">
    <property type="generic name" value="Ceftazidime"/>
</dbReference>
<dbReference type="DrugBank" id="DB03450">
    <property type="generic name" value="Cephalothin Group"/>
</dbReference>
<dbReference type="DrugBank" id="DB00713">
    <property type="generic name" value="Oxacillin"/>
</dbReference>
<dbReference type="DrugBank" id="DB00156">
    <property type="generic name" value="Threonine"/>
</dbReference>
<dbReference type="CARD" id="ARO:3001906">
    <property type="molecule name" value="CTX-M-44"/>
    <property type="mechanism identifier" value="ARO:0001004"/>
    <property type="mechanism name" value="antibiotic inactivation"/>
</dbReference>
<dbReference type="KEGG" id="ag:BAA07082"/>
<dbReference type="BRENDA" id="3.5.2.6">
    <property type="organism ID" value="2026"/>
</dbReference>
<dbReference type="SABIO-RK" id="Q47066"/>
<dbReference type="EvolutionaryTrace" id="Q47066"/>
<dbReference type="GO" id="GO:0008800">
    <property type="term" value="F:beta-lactamase activity"/>
    <property type="evidence" value="ECO:0007669"/>
    <property type="project" value="UniProtKB-EC"/>
</dbReference>
<dbReference type="GO" id="GO:0030655">
    <property type="term" value="P:beta-lactam antibiotic catabolic process"/>
    <property type="evidence" value="ECO:0007669"/>
    <property type="project" value="InterPro"/>
</dbReference>
<dbReference type="GO" id="GO:0046677">
    <property type="term" value="P:response to antibiotic"/>
    <property type="evidence" value="ECO:0007669"/>
    <property type="project" value="UniProtKB-KW"/>
</dbReference>
<dbReference type="Gene3D" id="3.40.710.10">
    <property type="entry name" value="DD-peptidase/beta-lactamase superfamily"/>
    <property type="match status" value="1"/>
</dbReference>
<dbReference type="InterPro" id="IPR012338">
    <property type="entry name" value="Beta-lactam/transpept-like"/>
</dbReference>
<dbReference type="InterPro" id="IPR045155">
    <property type="entry name" value="Beta-lactam_cat"/>
</dbReference>
<dbReference type="InterPro" id="IPR000871">
    <property type="entry name" value="Beta-lactam_class-A"/>
</dbReference>
<dbReference type="InterPro" id="IPR023650">
    <property type="entry name" value="Beta-lactam_class-A_AS"/>
</dbReference>
<dbReference type="NCBIfam" id="NF033103">
    <property type="entry name" value="bla_class_A"/>
    <property type="match status" value="1"/>
</dbReference>
<dbReference type="NCBIfam" id="NF033089">
    <property type="entry name" value="blaCTX-M"/>
    <property type="match status" value="1"/>
</dbReference>
<dbReference type="PANTHER" id="PTHR35333">
    <property type="entry name" value="BETA-LACTAMASE"/>
    <property type="match status" value="1"/>
</dbReference>
<dbReference type="PANTHER" id="PTHR35333:SF3">
    <property type="entry name" value="BETA-LACTAMASE-TYPE TRANSPEPTIDASE FOLD CONTAINING PROTEIN"/>
    <property type="match status" value="1"/>
</dbReference>
<dbReference type="Pfam" id="PF13354">
    <property type="entry name" value="Beta-lactamase2"/>
    <property type="match status" value="1"/>
</dbReference>
<dbReference type="PRINTS" id="PR00118">
    <property type="entry name" value="BLACTAMASEA"/>
</dbReference>
<dbReference type="SUPFAM" id="SSF56601">
    <property type="entry name" value="beta-lactamase/transpeptidase-like"/>
    <property type="match status" value="1"/>
</dbReference>
<dbReference type="PROSITE" id="PS00146">
    <property type="entry name" value="BETA_LACTAMASE_A"/>
    <property type="match status" value="1"/>
</dbReference>
<feature type="signal peptide">
    <location>
        <begin position="1"/>
        <end position="29"/>
    </location>
</feature>
<feature type="chain" id="PRO_0000016994" description="Beta-lactamase Toho-1">
    <location>
        <begin position="30"/>
        <end position="291"/>
    </location>
</feature>
<feature type="active site" description="Acyl-ester intermediate">
    <location>
        <position position="73"/>
    </location>
</feature>
<feature type="binding site">
    <location>
        <begin position="237"/>
        <end position="239"/>
    </location>
    <ligand>
        <name>substrate</name>
    </ligand>
</feature>
<feature type="helix" evidence="4">
    <location>
        <begin position="33"/>
        <end position="43"/>
    </location>
</feature>
<feature type="strand" evidence="4">
    <location>
        <begin position="46"/>
        <end position="54"/>
    </location>
</feature>
<feature type="turn" evidence="4">
    <location>
        <begin position="55"/>
        <end position="57"/>
    </location>
</feature>
<feature type="strand" evidence="4">
    <location>
        <begin position="60"/>
        <end position="64"/>
    </location>
</feature>
<feature type="helix" evidence="4">
    <location>
        <begin position="72"/>
        <end position="75"/>
    </location>
</feature>
<feature type="helix" evidence="4">
    <location>
        <begin position="76"/>
        <end position="87"/>
    </location>
</feature>
<feature type="helix" evidence="6">
    <location>
        <begin position="93"/>
        <end position="95"/>
    </location>
</feature>
<feature type="strand" evidence="4">
    <location>
        <begin position="97"/>
        <end position="99"/>
    </location>
</feature>
<feature type="helix" evidence="4">
    <location>
        <begin position="102"/>
        <end position="104"/>
    </location>
</feature>
<feature type="helix" evidence="4">
    <location>
        <begin position="112"/>
        <end position="115"/>
    </location>
</feature>
<feature type="strand" evidence="4">
    <location>
        <begin position="118"/>
        <end position="121"/>
    </location>
</feature>
<feature type="helix" evidence="4">
    <location>
        <begin position="122"/>
        <end position="131"/>
    </location>
</feature>
<feature type="helix" evidence="4">
    <location>
        <begin position="135"/>
        <end position="145"/>
    </location>
</feature>
<feature type="helix" evidence="4">
    <location>
        <begin position="148"/>
        <end position="157"/>
    </location>
</feature>
<feature type="helix" evidence="4">
    <location>
        <begin position="171"/>
        <end position="173"/>
    </location>
</feature>
<feature type="helix" evidence="4">
    <location>
        <begin position="186"/>
        <end position="198"/>
    </location>
</feature>
<feature type="strand" evidence="5">
    <location>
        <begin position="199"/>
        <end position="202"/>
    </location>
</feature>
<feature type="helix" evidence="4">
    <location>
        <begin position="204"/>
        <end position="215"/>
    </location>
</feature>
<feature type="turn" evidence="4">
    <location>
        <begin position="221"/>
        <end position="223"/>
    </location>
</feature>
<feature type="helix" evidence="4">
    <location>
        <begin position="224"/>
        <end position="227"/>
    </location>
</feature>
<feature type="strand" evidence="4">
    <location>
        <begin position="232"/>
        <end position="241"/>
    </location>
</feature>
<feature type="turn" evidence="4">
    <location>
        <begin position="242"/>
        <end position="244"/>
    </location>
</feature>
<feature type="strand" evidence="4">
    <location>
        <begin position="245"/>
        <end position="253"/>
    </location>
</feature>
<feature type="strand" evidence="4">
    <location>
        <begin position="255"/>
        <end position="257"/>
    </location>
</feature>
<feature type="strand" evidence="4">
    <location>
        <begin position="260"/>
        <end position="267"/>
    </location>
</feature>
<feature type="helix" evidence="4">
    <location>
        <begin position="277"/>
        <end position="288"/>
    </location>
</feature>
<geneLocation type="plasmid">
    <name>pMTY001</name>
</geneLocation>
<gene>
    <name type="primary">bla</name>
</gene>
<accession>Q47066</accession>
<sequence>MMTQSIRRSMLTVMATLPLLFSSATLHAQANSVQQQLEALEKSSGGRLGVALINTADNSQILYRADERFAMCSTSKVMAAAAVLKQSESDKHLLNQRVEIKKSDLVNYNPIAEKHVNGTMTLAELGAAALQYSDNTAMNKLIAHLGGPDKVTAFARSLGDETFRLDRTEPTLNTAIPGDPRDTTTPLAMAQTLKNLTLGKALAETQRAQLVTWLKGNTTGSASIRAGLPKSWVVGDKTGSGDYGTTNDIAVIWPENHAPLVLVTYFTQPEQKAERRRDILAAAAKIVTHGF</sequence>
<organism>
    <name type="scientific">Escherichia coli</name>
    <dbReference type="NCBI Taxonomy" id="562"/>
    <lineage>
        <taxon>Bacteria</taxon>
        <taxon>Pseudomonadati</taxon>
        <taxon>Pseudomonadota</taxon>
        <taxon>Gammaproteobacteria</taxon>
        <taxon>Enterobacterales</taxon>
        <taxon>Enterobacteriaceae</taxon>
        <taxon>Escherichia</taxon>
    </lineage>
</organism>
<name>BLT1_ECOLX</name>
<protein>
    <recommendedName>
        <fullName>Beta-lactamase Toho-1</fullName>
        <ecNumber>3.5.2.6</ecNumber>
    </recommendedName>
</protein>
<reference key="1">
    <citation type="journal article" date="1995" name="Antimicrob. Agents Chemother.">
        <title>Cloning and sequence of the gene encoding a cefotaxime-hydrolyzing class A beta-lactamase isolated from Escherichia coli.</title>
        <authorList>
            <person name="Ishii Y."/>
            <person name="Ohno A."/>
            <person name="Taguchi H."/>
            <person name="Imajo S."/>
            <person name="Ishiguro M."/>
            <person name="Matsuzawa H."/>
        </authorList>
    </citation>
    <scope>NUCLEOTIDE SEQUENCE [GENOMIC DNA]</scope>
    <source>
        <strain>TUH12191</strain>
        <plasmid>pMTY001</plasmid>
    </source>
</reference>
<reference key="2">
    <citation type="journal article" date="1991" name="Biochem. J.">
        <title>A standard numbering scheme for the class A beta-lactamases.</title>
        <authorList>
            <person name="Ambler R.P."/>
            <person name="Coulson A.F."/>
            <person name="Frere J.M."/>
            <person name="Ghuysen J.M."/>
            <person name="Joris B."/>
            <person name="Forsman M."/>
            <person name="Levesque R.C."/>
            <person name="Tiraby G."/>
            <person name="Waley S.G."/>
        </authorList>
    </citation>
    <scope>AMINO ACID NUMBERING SCHEME</scope>
</reference>
<reference key="3">
    <citation type="journal article" date="1999" name="J. Mol. Biol.">
        <title>Crystal structure of the E166A mutant of extended-spectrum beta-lactamase Toho-1 at 1.8 A resolution.</title>
        <authorList>
            <person name="Ibuka A."/>
            <person name="Taguchi A."/>
            <person name="Ishiguro M."/>
            <person name="Fushinobu S."/>
            <person name="Ishii Y."/>
            <person name="Kamitori S."/>
            <person name="Okuyama K."/>
            <person name="Yamaguchi K."/>
            <person name="Konno M."/>
            <person name="Matsuzawa H."/>
        </authorList>
    </citation>
    <scope>X-RAY CRYSTALLOGRAPHY (1.8 ANGSTROMS) OF MUTANT ALA-169</scope>
    <source>
        <strain>TUH12191</strain>
        <plasmid>pMTY001</plasmid>
    </source>
</reference>
<comment type="function">
    <text>Has strong cefotaxime-hydrolyzing activity.</text>
</comment>
<comment type="catalytic activity">
    <reaction evidence="1">
        <text>a beta-lactam + H2O = a substituted beta-amino acid</text>
        <dbReference type="Rhea" id="RHEA:20401"/>
        <dbReference type="ChEBI" id="CHEBI:15377"/>
        <dbReference type="ChEBI" id="CHEBI:35627"/>
        <dbReference type="ChEBI" id="CHEBI:140347"/>
        <dbReference type="EC" id="3.5.2.6"/>
    </reaction>
</comment>
<comment type="subunit">
    <text>Monomer.</text>
</comment>
<comment type="miscellaneous">
    <text evidence="3">The class A beta-lactamase family has a specific amino-acid numbering system, sometimes called Ambler or ABL numbering and often misspelt as Amber. A multiple sequence alignment was used to derive a consensus sequence and then the consensus was numbered taking into account insertions and deletions. This allows use of identical numbers, e.g. for active site residues, despite differences in protein length. UniProt always uses natural numbering of residues, hence there appear to be differences in numbering between this entry and some papers.</text>
</comment>
<comment type="similarity">
    <text evidence="2">Belongs to the class-A beta-lactamase family.</text>
</comment>
<evidence type="ECO:0000255" key="1">
    <source>
        <dbReference type="PROSITE-ProRule" id="PRU10101"/>
    </source>
</evidence>
<evidence type="ECO:0000305" key="2"/>
<evidence type="ECO:0000305" key="3">
    <source>
    </source>
</evidence>
<evidence type="ECO:0007829" key="4">
    <source>
        <dbReference type="PDB" id="2ZQ7"/>
    </source>
</evidence>
<evidence type="ECO:0007829" key="5">
    <source>
        <dbReference type="PDB" id="2ZQ8"/>
    </source>
</evidence>
<evidence type="ECO:0007829" key="6">
    <source>
        <dbReference type="PDB" id="5KMW"/>
    </source>
</evidence>
<proteinExistence type="evidence at protein level"/>